<reference key="1">
    <citation type="journal article" date="2010" name="J. Proteome Res.">
        <title>Molecular diversification of peptide toxins from the tarantula Haplopelma hainanum (Ornithoctonus hainana) venom based on transcriptomic, peptidomic, and genomic analyses.</title>
        <authorList>
            <person name="Tang X."/>
            <person name="Zhang Y."/>
            <person name="Hu W."/>
            <person name="Xu D."/>
            <person name="Tao H."/>
            <person name="Yang X."/>
            <person name="Li Y."/>
            <person name="Jiang L."/>
            <person name="Liang S."/>
        </authorList>
    </citation>
    <scope>NUCLEOTIDE SEQUENCE [LARGE SCALE MRNA]</scope>
    <source>
        <tissue>Venom gland</tissue>
    </source>
</reference>
<feature type="signal peptide" evidence="2">
    <location>
        <begin position="1"/>
        <end position="19"/>
    </location>
</feature>
<feature type="propeptide" id="PRO_0000400689" evidence="1">
    <location>
        <begin position="20"/>
        <end position="50"/>
    </location>
</feature>
<feature type="peptide" id="PRO_0000400690" description="U7-theraphotoxin-Hhn1a 6">
    <location>
        <begin position="51"/>
        <end position="90"/>
    </location>
</feature>
<feature type="disulfide bond" evidence="1">
    <location>
        <begin position="51"/>
        <end position="65"/>
    </location>
</feature>
<feature type="disulfide bond" evidence="1">
    <location>
        <begin position="58"/>
        <end position="70"/>
    </location>
</feature>
<feature type="disulfide bond" evidence="1">
    <location>
        <begin position="64"/>
        <end position="81"/>
    </location>
</feature>
<evidence type="ECO:0000250" key="1"/>
<evidence type="ECO:0000255" key="2"/>
<evidence type="ECO:0000305" key="3"/>
<accession>D2Y2B4</accession>
<protein>
    <recommendedName>
        <fullName>U7-theraphotoxin-Hhn1a 6</fullName>
        <shortName>U7-TRTX-Hhn1a</shortName>
    </recommendedName>
    <alternativeName>
        <fullName>Hainantoxin-XIII.6</fullName>
        <shortName>HNTX-XIII.6</shortName>
    </alternativeName>
</protein>
<name>H13A6_CYRHA</name>
<dbReference type="EMBL" id="GU292991">
    <property type="protein sequence ID" value="ADB56807.1"/>
    <property type="molecule type" value="mRNA"/>
</dbReference>
<dbReference type="SMR" id="D2Y2B4"/>
<dbReference type="ArachnoServer" id="AS001986">
    <property type="toxin name" value="U7-theraphotoxin-Hhn1a"/>
</dbReference>
<dbReference type="GO" id="GO:0005576">
    <property type="term" value="C:extracellular region"/>
    <property type="evidence" value="ECO:0007669"/>
    <property type="project" value="UniProtKB-SubCell"/>
</dbReference>
<dbReference type="GO" id="GO:0008200">
    <property type="term" value="F:ion channel inhibitor activity"/>
    <property type="evidence" value="ECO:0007669"/>
    <property type="project" value="InterPro"/>
</dbReference>
<dbReference type="GO" id="GO:0090729">
    <property type="term" value="F:toxin activity"/>
    <property type="evidence" value="ECO:0007669"/>
    <property type="project" value="UniProtKB-KW"/>
</dbReference>
<dbReference type="InterPro" id="IPR011696">
    <property type="entry name" value="Huwentoxin-1"/>
</dbReference>
<dbReference type="Pfam" id="PF07740">
    <property type="entry name" value="Toxin_12"/>
    <property type="match status" value="1"/>
</dbReference>
<dbReference type="SUPFAM" id="SSF57059">
    <property type="entry name" value="omega toxin-like"/>
    <property type="match status" value="1"/>
</dbReference>
<proteinExistence type="evidence at transcript level"/>
<keyword id="KW-1015">Disulfide bond</keyword>
<keyword id="KW-0872">Ion channel impairing toxin</keyword>
<keyword id="KW-0960">Knottin</keyword>
<keyword id="KW-0964">Secreted</keyword>
<keyword id="KW-0732">Signal</keyword>
<keyword id="KW-0800">Toxin</keyword>
<organism>
    <name type="scientific">Cyriopagopus hainanus</name>
    <name type="common">Chinese bird spider</name>
    <name type="synonym">Haplopelma hainanum</name>
    <dbReference type="NCBI Taxonomy" id="209901"/>
    <lineage>
        <taxon>Eukaryota</taxon>
        <taxon>Metazoa</taxon>
        <taxon>Ecdysozoa</taxon>
        <taxon>Arthropoda</taxon>
        <taxon>Chelicerata</taxon>
        <taxon>Arachnida</taxon>
        <taxon>Araneae</taxon>
        <taxon>Mygalomorphae</taxon>
        <taxon>Theraphosidae</taxon>
        <taxon>Haplopelma</taxon>
    </lineage>
</organism>
<comment type="function">
    <text evidence="1">Ion channel inhibitor.</text>
</comment>
<comment type="subcellular location">
    <subcellularLocation>
        <location evidence="1">Secreted</location>
    </subcellularLocation>
</comment>
<comment type="tissue specificity">
    <text>Expressed by the venom gland.</text>
</comment>
<comment type="domain">
    <text evidence="1">The presence of a 'disulfide through disulfide knot' structurally defines this protein as a knottin.</text>
</comment>
<comment type="similarity">
    <text evidence="3">Belongs to the neurotoxin 10 (Hwtx-1) family. 13 (Hntx-13) subfamily.</text>
</comment>
<sequence>MKTAIFTVVLALAVFAVLSFGWEANEKALSEEFTELIHEKEAASEAEARECRYFWGECHDHMPCCDWLVCRYKWPITYNICVWNRTFPEK</sequence>